<protein>
    <recommendedName>
        <fullName evidence="1">UPF0246 protein PC1_3665</fullName>
    </recommendedName>
</protein>
<comment type="similarity">
    <text evidence="1">Belongs to the UPF0246 family.</text>
</comment>
<sequence>MLITISPAKTLDYTSPLATTRYTQPELLDYSSQLIDVCKKLTPAQIASLMSISDKLADLNAGRFSEWHPDFTPENARQALLAFKGDVYTGLAAEDFSEDDFDFAQQHLRMLSGLYGVLRPLDLMRPYRLEMGTKLENKAGKDLYSFWGDTITEKLNQALREQGDDVLVNLASDEYFKAVKPKKLNARLIKPVFLDEKNGKFKVISFYAKKARGLMSRFIIQNRLTQPEQLKAFNLDGYFFEAADSSADELVFKRHEQ</sequence>
<dbReference type="EMBL" id="CP001657">
    <property type="protein sequence ID" value="ACT14680.1"/>
    <property type="molecule type" value="Genomic_DNA"/>
</dbReference>
<dbReference type="SMR" id="C6DF16"/>
<dbReference type="STRING" id="561230.PC1_3665"/>
<dbReference type="KEGG" id="pct:PC1_3665"/>
<dbReference type="eggNOG" id="COG3022">
    <property type="taxonomic scope" value="Bacteria"/>
</dbReference>
<dbReference type="HOGENOM" id="CLU_061989_0_0_6"/>
<dbReference type="OrthoDB" id="9777133at2"/>
<dbReference type="Proteomes" id="UP000002736">
    <property type="component" value="Chromosome"/>
</dbReference>
<dbReference type="GO" id="GO:0005829">
    <property type="term" value="C:cytosol"/>
    <property type="evidence" value="ECO:0007669"/>
    <property type="project" value="TreeGrafter"/>
</dbReference>
<dbReference type="GO" id="GO:0033194">
    <property type="term" value="P:response to hydroperoxide"/>
    <property type="evidence" value="ECO:0007669"/>
    <property type="project" value="TreeGrafter"/>
</dbReference>
<dbReference type="HAMAP" id="MF_00652">
    <property type="entry name" value="UPF0246"/>
    <property type="match status" value="1"/>
</dbReference>
<dbReference type="InterPro" id="IPR005583">
    <property type="entry name" value="YaaA"/>
</dbReference>
<dbReference type="NCBIfam" id="NF002541">
    <property type="entry name" value="PRK02101.1-1"/>
    <property type="match status" value="1"/>
</dbReference>
<dbReference type="NCBIfam" id="NF002542">
    <property type="entry name" value="PRK02101.1-3"/>
    <property type="match status" value="1"/>
</dbReference>
<dbReference type="PANTHER" id="PTHR30283:SF4">
    <property type="entry name" value="PEROXIDE STRESS RESISTANCE PROTEIN YAAA"/>
    <property type="match status" value="1"/>
</dbReference>
<dbReference type="PANTHER" id="PTHR30283">
    <property type="entry name" value="PEROXIDE STRESS RESPONSE PROTEIN YAAA"/>
    <property type="match status" value="1"/>
</dbReference>
<dbReference type="Pfam" id="PF03883">
    <property type="entry name" value="H2O2_YaaD"/>
    <property type="match status" value="1"/>
</dbReference>
<accession>C6DF16</accession>
<organism>
    <name type="scientific">Pectobacterium carotovorum subsp. carotovorum (strain PC1)</name>
    <dbReference type="NCBI Taxonomy" id="561230"/>
    <lineage>
        <taxon>Bacteria</taxon>
        <taxon>Pseudomonadati</taxon>
        <taxon>Pseudomonadota</taxon>
        <taxon>Gammaproteobacteria</taxon>
        <taxon>Enterobacterales</taxon>
        <taxon>Pectobacteriaceae</taxon>
        <taxon>Pectobacterium</taxon>
    </lineage>
</organism>
<gene>
    <name type="ordered locus">PC1_3665</name>
</gene>
<reference key="1">
    <citation type="submission" date="2009-07" db="EMBL/GenBank/DDBJ databases">
        <title>Complete sequence of Pectobacterium carotovorum subsp. carotovorum PC1.</title>
        <authorList>
            <consortium name="US DOE Joint Genome Institute"/>
            <person name="Lucas S."/>
            <person name="Copeland A."/>
            <person name="Lapidus A."/>
            <person name="Glavina del Rio T."/>
            <person name="Tice H."/>
            <person name="Bruce D."/>
            <person name="Goodwin L."/>
            <person name="Pitluck S."/>
            <person name="Munk A.C."/>
            <person name="Brettin T."/>
            <person name="Detter J.C."/>
            <person name="Han C."/>
            <person name="Tapia R."/>
            <person name="Larimer F."/>
            <person name="Land M."/>
            <person name="Hauser L."/>
            <person name="Kyrpides N."/>
            <person name="Mikhailova N."/>
            <person name="Balakrishnan V."/>
            <person name="Glasner J."/>
            <person name="Perna N.T."/>
        </authorList>
    </citation>
    <scope>NUCLEOTIDE SEQUENCE [LARGE SCALE GENOMIC DNA]</scope>
    <source>
        <strain>PC1</strain>
    </source>
</reference>
<feature type="chain" id="PRO_1000212427" description="UPF0246 protein PC1_3665">
    <location>
        <begin position="1"/>
        <end position="257"/>
    </location>
</feature>
<proteinExistence type="inferred from homology"/>
<name>Y3665_PECCP</name>
<evidence type="ECO:0000255" key="1">
    <source>
        <dbReference type="HAMAP-Rule" id="MF_00652"/>
    </source>
</evidence>